<sequence>MPTINQLIRKPRQAPVEKSKVPALKACPQRRGVCTRVYTTTPKKPNSALRKVCKVKLTSGFEVISYIGGEGHNLQEHSVVLVRGGRVKDLPGVRYHTVRGSLDTAGVKDRKQSRSKYGAKRPKKA</sequence>
<dbReference type="EMBL" id="CP000116">
    <property type="protein sequence ID" value="AAZ96353.1"/>
    <property type="molecule type" value="Genomic_DNA"/>
</dbReference>
<dbReference type="RefSeq" id="WP_011310913.1">
    <property type="nucleotide sequence ID" value="NC_007404.1"/>
</dbReference>
<dbReference type="SMR" id="Q3SLQ4"/>
<dbReference type="STRING" id="292415.Tbd_0400"/>
<dbReference type="KEGG" id="tbd:Tbd_0400"/>
<dbReference type="eggNOG" id="COG0048">
    <property type="taxonomic scope" value="Bacteria"/>
</dbReference>
<dbReference type="HOGENOM" id="CLU_104295_1_2_4"/>
<dbReference type="OrthoDB" id="9802366at2"/>
<dbReference type="Proteomes" id="UP000008291">
    <property type="component" value="Chromosome"/>
</dbReference>
<dbReference type="GO" id="GO:0015935">
    <property type="term" value="C:small ribosomal subunit"/>
    <property type="evidence" value="ECO:0007669"/>
    <property type="project" value="InterPro"/>
</dbReference>
<dbReference type="GO" id="GO:0019843">
    <property type="term" value="F:rRNA binding"/>
    <property type="evidence" value="ECO:0007669"/>
    <property type="project" value="UniProtKB-UniRule"/>
</dbReference>
<dbReference type="GO" id="GO:0003735">
    <property type="term" value="F:structural constituent of ribosome"/>
    <property type="evidence" value="ECO:0007669"/>
    <property type="project" value="InterPro"/>
</dbReference>
<dbReference type="GO" id="GO:0000049">
    <property type="term" value="F:tRNA binding"/>
    <property type="evidence" value="ECO:0007669"/>
    <property type="project" value="UniProtKB-UniRule"/>
</dbReference>
<dbReference type="GO" id="GO:0006412">
    <property type="term" value="P:translation"/>
    <property type="evidence" value="ECO:0007669"/>
    <property type="project" value="UniProtKB-UniRule"/>
</dbReference>
<dbReference type="CDD" id="cd03368">
    <property type="entry name" value="Ribosomal_S12"/>
    <property type="match status" value="1"/>
</dbReference>
<dbReference type="FunFam" id="2.40.50.140:FF:000001">
    <property type="entry name" value="30S ribosomal protein S12"/>
    <property type="match status" value="1"/>
</dbReference>
<dbReference type="Gene3D" id="2.40.50.140">
    <property type="entry name" value="Nucleic acid-binding proteins"/>
    <property type="match status" value="1"/>
</dbReference>
<dbReference type="HAMAP" id="MF_00403_B">
    <property type="entry name" value="Ribosomal_uS12_B"/>
    <property type="match status" value="1"/>
</dbReference>
<dbReference type="InterPro" id="IPR012340">
    <property type="entry name" value="NA-bd_OB-fold"/>
</dbReference>
<dbReference type="InterPro" id="IPR006032">
    <property type="entry name" value="Ribosomal_uS12"/>
</dbReference>
<dbReference type="InterPro" id="IPR005679">
    <property type="entry name" value="Ribosomal_uS12_bac"/>
</dbReference>
<dbReference type="NCBIfam" id="TIGR00981">
    <property type="entry name" value="rpsL_bact"/>
    <property type="match status" value="1"/>
</dbReference>
<dbReference type="PANTHER" id="PTHR11652">
    <property type="entry name" value="30S RIBOSOMAL PROTEIN S12 FAMILY MEMBER"/>
    <property type="match status" value="1"/>
</dbReference>
<dbReference type="Pfam" id="PF00164">
    <property type="entry name" value="Ribosom_S12_S23"/>
    <property type="match status" value="1"/>
</dbReference>
<dbReference type="PIRSF" id="PIRSF002133">
    <property type="entry name" value="Ribosomal_S12/S23"/>
    <property type="match status" value="1"/>
</dbReference>
<dbReference type="PRINTS" id="PR01034">
    <property type="entry name" value="RIBOSOMALS12"/>
</dbReference>
<dbReference type="SUPFAM" id="SSF50249">
    <property type="entry name" value="Nucleic acid-binding proteins"/>
    <property type="match status" value="1"/>
</dbReference>
<dbReference type="PROSITE" id="PS00055">
    <property type="entry name" value="RIBOSOMAL_S12"/>
    <property type="match status" value="1"/>
</dbReference>
<accession>Q3SLQ4</accession>
<proteinExistence type="inferred from homology"/>
<reference key="1">
    <citation type="journal article" date="2006" name="J. Bacteriol.">
        <title>The genome sequence of the obligately chemolithoautotrophic, facultatively anaerobic bacterium Thiobacillus denitrificans.</title>
        <authorList>
            <person name="Beller H.R."/>
            <person name="Chain P.S."/>
            <person name="Letain T.E."/>
            <person name="Chakicherla A."/>
            <person name="Larimer F.W."/>
            <person name="Richardson P.M."/>
            <person name="Coleman M.A."/>
            <person name="Wood A.P."/>
            <person name="Kelly D.P."/>
        </authorList>
    </citation>
    <scope>NUCLEOTIDE SEQUENCE [LARGE SCALE GENOMIC DNA]</scope>
    <source>
        <strain>ATCC 25259 / T1</strain>
    </source>
</reference>
<comment type="function">
    <text evidence="2">With S4 and S5 plays an important role in translational accuracy.</text>
</comment>
<comment type="function">
    <text evidence="2">Interacts with and stabilizes bases of the 16S rRNA that are involved in tRNA selection in the A site and with the mRNA backbone. Located at the interface of the 30S and 50S subunits, it traverses the body of the 30S subunit contacting proteins on the other side and probably holding the rRNA structure together. The combined cluster of proteins S8, S12 and S17 appears to hold together the shoulder and platform of the 30S subunit.</text>
</comment>
<comment type="subunit">
    <text evidence="2">Part of the 30S ribosomal subunit. Contacts proteins S8 and S17. May interact with IF1 in the 30S initiation complex.</text>
</comment>
<comment type="similarity">
    <text evidence="2">Belongs to the universal ribosomal protein uS12 family.</text>
</comment>
<gene>
    <name evidence="2" type="primary">rpsL</name>
    <name type="ordered locus">Tbd_0400</name>
</gene>
<evidence type="ECO:0000250" key="1"/>
<evidence type="ECO:0000255" key="2">
    <source>
        <dbReference type="HAMAP-Rule" id="MF_00403"/>
    </source>
</evidence>
<evidence type="ECO:0000256" key="3">
    <source>
        <dbReference type="SAM" id="MobiDB-lite"/>
    </source>
</evidence>
<evidence type="ECO:0000305" key="4"/>
<organism>
    <name type="scientific">Thiobacillus denitrificans (strain ATCC 25259 / T1)</name>
    <dbReference type="NCBI Taxonomy" id="292415"/>
    <lineage>
        <taxon>Bacteria</taxon>
        <taxon>Pseudomonadati</taxon>
        <taxon>Pseudomonadota</taxon>
        <taxon>Betaproteobacteria</taxon>
        <taxon>Nitrosomonadales</taxon>
        <taxon>Thiobacillaceae</taxon>
        <taxon>Thiobacillus</taxon>
    </lineage>
</organism>
<protein>
    <recommendedName>
        <fullName evidence="2">Small ribosomal subunit protein uS12</fullName>
    </recommendedName>
    <alternativeName>
        <fullName evidence="4">30S ribosomal protein S12</fullName>
    </alternativeName>
</protein>
<feature type="chain" id="PRO_0000226421" description="Small ribosomal subunit protein uS12">
    <location>
        <begin position="1"/>
        <end position="125"/>
    </location>
</feature>
<feature type="region of interest" description="Disordered" evidence="3">
    <location>
        <begin position="101"/>
        <end position="125"/>
    </location>
</feature>
<feature type="compositionally biased region" description="Basic residues" evidence="3">
    <location>
        <begin position="113"/>
        <end position="125"/>
    </location>
</feature>
<feature type="modified residue" description="3-methylthioaspartic acid" evidence="1">
    <location>
        <position position="89"/>
    </location>
</feature>
<keyword id="KW-0488">Methylation</keyword>
<keyword id="KW-1185">Reference proteome</keyword>
<keyword id="KW-0687">Ribonucleoprotein</keyword>
<keyword id="KW-0689">Ribosomal protein</keyword>
<keyword id="KW-0694">RNA-binding</keyword>
<keyword id="KW-0699">rRNA-binding</keyword>
<keyword id="KW-0820">tRNA-binding</keyword>
<name>RS12_THIDA</name>